<feature type="chain" id="PRO_0000226173" description="Ketol-acid reductoisomerase (NADP(+))">
    <location>
        <begin position="1"/>
        <end position="338"/>
    </location>
</feature>
<feature type="domain" description="KARI N-terminal Rossmann" evidence="2">
    <location>
        <begin position="1"/>
        <end position="181"/>
    </location>
</feature>
<feature type="domain" description="KARI C-terminal knotted" evidence="3">
    <location>
        <begin position="182"/>
        <end position="327"/>
    </location>
</feature>
<feature type="active site" evidence="1">
    <location>
        <position position="107"/>
    </location>
</feature>
<feature type="binding site" evidence="1">
    <location>
        <begin position="24"/>
        <end position="27"/>
    </location>
    <ligand>
        <name>NADP(+)</name>
        <dbReference type="ChEBI" id="CHEBI:58349"/>
    </ligand>
</feature>
<feature type="binding site" evidence="1">
    <location>
        <position position="47"/>
    </location>
    <ligand>
        <name>NADP(+)</name>
        <dbReference type="ChEBI" id="CHEBI:58349"/>
    </ligand>
</feature>
<feature type="binding site" evidence="1">
    <location>
        <position position="52"/>
    </location>
    <ligand>
        <name>NADP(+)</name>
        <dbReference type="ChEBI" id="CHEBI:58349"/>
    </ligand>
</feature>
<feature type="binding site" evidence="1">
    <location>
        <position position="133"/>
    </location>
    <ligand>
        <name>NADP(+)</name>
        <dbReference type="ChEBI" id="CHEBI:58349"/>
    </ligand>
</feature>
<feature type="binding site" evidence="1">
    <location>
        <position position="190"/>
    </location>
    <ligand>
        <name>Mg(2+)</name>
        <dbReference type="ChEBI" id="CHEBI:18420"/>
        <label>1</label>
    </ligand>
</feature>
<feature type="binding site" evidence="1">
    <location>
        <position position="190"/>
    </location>
    <ligand>
        <name>Mg(2+)</name>
        <dbReference type="ChEBI" id="CHEBI:18420"/>
        <label>2</label>
    </ligand>
</feature>
<feature type="binding site" evidence="1">
    <location>
        <position position="194"/>
    </location>
    <ligand>
        <name>Mg(2+)</name>
        <dbReference type="ChEBI" id="CHEBI:18420"/>
        <label>1</label>
    </ligand>
</feature>
<feature type="binding site" evidence="1">
    <location>
        <position position="226"/>
    </location>
    <ligand>
        <name>Mg(2+)</name>
        <dbReference type="ChEBI" id="CHEBI:18420"/>
        <label>2</label>
    </ligand>
</feature>
<feature type="binding site" evidence="1">
    <location>
        <position position="230"/>
    </location>
    <ligand>
        <name>Mg(2+)</name>
        <dbReference type="ChEBI" id="CHEBI:18420"/>
        <label>2</label>
    </ligand>
</feature>
<feature type="binding site" evidence="1">
    <location>
        <position position="251"/>
    </location>
    <ligand>
        <name>substrate</name>
    </ligand>
</feature>
<reference key="1">
    <citation type="journal article" date="2009" name="BMC Genomics">
        <title>Metabolic analysis of the soil microbe Dechloromonas aromatica str. RCB: indications of a surprisingly complex life-style and cryptic anaerobic pathways for aromatic degradation.</title>
        <authorList>
            <person name="Salinero K.K."/>
            <person name="Keller K."/>
            <person name="Feil W.S."/>
            <person name="Feil H."/>
            <person name="Trong S."/>
            <person name="Di Bartolo G."/>
            <person name="Lapidus A."/>
        </authorList>
    </citation>
    <scope>NUCLEOTIDE SEQUENCE [LARGE SCALE GENOMIC DNA]</scope>
    <source>
        <strain>RCB</strain>
    </source>
</reference>
<protein>
    <recommendedName>
        <fullName evidence="1">Ketol-acid reductoisomerase (NADP(+))</fullName>
        <shortName evidence="1">KARI</shortName>
        <ecNumber evidence="1">1.1.1.86</ecNumber>
    </recommendedName>
    <alternativeName>
        <fullName evidence="1">Acetohydroxy-acid isomeroreductase</fullName>
        <shortName evidence="1">AHIR</shortName>
    </alternativeName>
    <alternativeName>
        <fullName evidence="1">Alpha-keto-beta-hydroxylacyl reductoisomerase</fullName>
    </alternativeName>
    <alternativeName>
        <fullName evidence="1">Ketol-acid reductoisomerase type 1</fullName>
    </alternativeName>
    <alternativeName>
        <fullName evidence="1">Ketol-acid reductoisomerase type I</fullName>
    </alternativeName>
</protein>
<name>ILVC_DECAR</name>
<sequence length="338" mass="36936">MKVYYDKDADLSLIKGKKVTIVGYGSQGHAHAQNLKDSGVKVTVGLRKDGASWKKAEAAGLKVEEIAKAVKGADVVMILLPDENIPQVYNEEVAPNLKKGAALAFAHGFNVHYNQVVPRADVDVIMVAPKGPGHTVRSEYLKGGGVPSLIAVYQDVTKKAKDIALSYAAANGGTKGGVIETNFREETETDLFGEQAVLCGGAVELVKMGFETLTEAGYAPEMAYFECLHELKLIVDLMYEGGIANMNYSISNNAEYGEYVTGTEVINEQSRVAMRNALKRIQTGEYAKMFIQEGKTNYPSMTARRRLNAVHPIETVGGQLRDMMPWIRKNKLVDQTKN</sequence>
<comment type="function">
    <text evidence="1">Involved in the biosynthesis of branched-chain amino acids (BCAA). Catalyzes an alkyl-migration followed by a ketol-acid reduction of (S)-2-acetolactate (S2AL) to yield (R)-2,3-dihydroxy-isovalerate. In the isomerase reaction, S2AL is rearranged via a Mg-dependent methyl migration to produce 3-hydroxy-3-methyl-2-ketobutyrate (HMKB). In the reductase reaction, this 2-ketoacid undergoes a metal-dependent reduction by NADPH to yield (R)-2,3-dihydroxy-isovalerate.</text>
</comment>
<comment type="catalytic activity">
    <reaction evidence="1">
        <text>(2R)-2,3-dihydroxy-3-methylbutanoate + NADP(+) = (2S)-2-acetolactate + NADPH + H(+)</text>
        <dbReference type="Rhea" id="RHEA:22068"/>
        <dbReference type="ChEBI" id="CHEBI:15378"/>
        <dbReference type="ChEBI" id="CHEBI:49072"/>
        <dbReference type="ChEBI" id="CHEBI:57783"/>
        <dbReference type="ChEBI" id="CHEBI:58349"/>
        <dbReference type="ChEBI" id="CHEBI:58476"/>
        <dbReference type="EC" id="1.1.1.86"/>
    </reaction>
</comment>
<comment type="catalytic activity">
    <reaction evidence="1">
        <text>(2R,3R)-2,3-dihydroxy-3-methylpentanoate + NADP(+) = (S)-2-ethyl-2-hydroxy-3-oxobutanoate + NADPH + H(+)</text>
        <dbReference type="Rhea" id="RHEA:13493"/>
        <dbReference type="ChEBI" id="CHEBI:15378"/>
        <dbReference type="ChEBI" id="CHEBI:49256"/>
        <dbReference type="ChEBI" id="CHEBI:49258"/>
        <dbReference type="ChEBI" id="CHEBI:57783"/>
        <dbReference type="ChEBI" id="CHEBI:58349"/>
        <dbReference type="EC" id="1.1.1.86"/>
    </reaction>
</comment>
<comment type="cofactor">
    <cofactor evidence="1">
        <name>Mg(2+)</name>
        <dbReference type="ChEBI" id="CHEBI:18420"/>
    </cofactor>
    <text evidence="1">Binds 2 magnesium ions per subunit.</text>
</comment>
<comment type="pathway">
    <text evidence="1">Amino-acid biosynthesis; L-isoleucine biosynthesis; L-isoleucine from 2-oxobutanoate: step 2/4.</text>
</comment>
<comment type="pathway">
    <text evidence="1">Amino-acid biosynthesis; L-valine biosynthesis; L-valine from pyruvate: step 2/4.</text>
</comment>
<comment type="similarity">
    <text evidence="1">Belongs to the ketol-acid reductoisomerase family.</text>
</comment>
<proteinExistence type="inferred from homology"/>
<accession>Q47BH8</accession>
<organism>
    <name type="scientific">Dechloromonas aromatica (strain RCB)</name>
    <dbReference type="NCBI Taxonomy" id="159087"/>
    <lineage>
        <taxon>Bacteria</taxon>
        <taxon>Pseudomonadati</taxon>
        <taxon>Pseudomonadota</taxon>
        <taxon>Betaproteobacteria</taxon>
        <taxon>Rhodocyclales</taxon>
        <taxon>Azonexaceae</taxon>
        <taxon>Dechloromonas</taxon>
    </lineage>
</organism>
<gene>
    <name evidence="1" type="primary">ilvC</name>
    <name type="ordered locus">Daro_3073</name>
</gene>
<evidence type="ECO:0000255" key="1">
    <source>
        <dbReference type="HAMAP-Rule" id="MF_00435"/>
    </source>
</evidence>
<evidence type="ECO:0000255" key="2">
    <source>
        <dbReference type="PROSITE-ProRule" id="PRU01197"/>
    </source>
</evidence>
<evidence type="ECO:0000255" key="3">
    <source>
        <dbReference type="PROSITE-ProRule" id="PRU01198"/>
    </source>
</evidence>
<keyword id="KW-0028">Amino-acid biosynthesis</keyword>
<keyword id="KW-0100">Branched-chain amino acid biosynthesis</keyword>
<keyword id="KW-0460">Magnesium</keyword>
<keyword id="KW-0479">Metal-binding</keyword>
<keyword id="KW-0521">NADP</keyword>
<keyword id="KW-0560">Oxidoreductase</keyword>
<dbReference type="EC" id="1.1.1.86" evidence="1"/>
<dbReference type="EMBL" id="CP000089">
    <property type="protein sequence ID" value="AAZ47803.1"/>
    <property type="molecule type" value="Genomic_DNA"/>
</dbReference>
<dbReference type="SMR" id="Q47BH8"/>
<dbReference type="STRING" id="159087.Daro_3073"/>
<dbReference type="KEGG" id="dar:Daro_3073"/>
<dbReference type="eggNOG" id="COG0059">
    <property type="taxonomic scope" value="Bacteria"/>
</dbReference>
<dbReference type="HOGENOM" id="CLU_033821_0_1_4"/>
<dbReference type="OrthoDB" id="9804088at2"/>
<dbReference type="UniPathway" id="UPA00047">
    <property type="reaction ID" value="UER00056"/>
</dbReference>
<dbReference type="UniPathway" id="UPA00049">
    <property type="reaction ID" value="UER00060"/>
</dbReference>
<dbReference type="GO" id="GO:0005829">
    <property type="term" value="C:cytosol"/>
    <property type="evidence" value="ECO:0007669"/>
    <property type="project" value="TreeGrafter"/>
</dbReference>
<dbReference type="GO" id="GO:0004455">
    <property type="term" value="F:ketol-acid reductoisomerase activity"/>
    <property type="evidence" value="ECO:0007669"/>
    <property type="project" value="UniProtKB-UniRule"/>
</dbReference>
<dbReference type="GO" id="GO:0000287">
    <property type="term" value="F:magnesium ion binding"/>
    <property type="evidence" value="ECO:0007669"/>
    <property type="project" value="UniProtKB-UniRule"/>
</dbReference>
<dbReference type="GO" id="GO:0050661">
    <property type="term" value="F:NADP binding"/>
    <property type="evidence" value="ECO:0007669"/>
    <property type="project" value="InterPro"/>
</dbReference>
<dbReference type="GO" id="GO:0009097">
    <property type="term" value="P:isoleucine biosynthetic process"/>
    <property type="evidence" value="ECO:0007669"/>
    <property type="project" value="UniProtKB-UniRule"/>
</dbReference>
<dbReference type="GO" id="GO:0009099">
    <property type="term" value="P:L-valine biosynthetic process"/>
    <property type="evidence" value="ECO:0007669"/>
    <property type="project" value="UniProtKB-UniRule"/>
</dbReference>
<dbReference type="FunFam" id="3.40.50.720:FF:000023">
    <property type="entry name" value="Ketol-acid reductoisomerase (NADP(+))"/>
    <property type="match status" value="1"/>
</dbReference>
<dbReference type="Gene3D" id="6.10.240.10">
    <property type="match status" value="1"/>
</dbReference>
<dbReference type="Gene3D" id="3.40.50.720">
    <property type="entry name" value="NAD(P)-binding Rossmann-like Domain"/>
    <property type="match status" value="1"/>
</dbReference>
<dbReference type="HAMAP" id="MF_00435">
    <property type="entry name" value="IlvC"/>
    <property type="match status" value="1"/>
</dbReference>
<dbReference type="InterPro" id="IPR008927">
    <property type="entry name" value="6-PGluconate_DH-like_C_sf"/>
</dbReference>
<dbReference type="InterPro" id="IPR013023">
    <property type="entry name" value="KARI"/>
</dbReference>
<dbReference type="InterPro" id="IPR000506">
    <property type="entry name" value="KARI_C"/>
</dbReference>
<dbReference type="InterPro" id="IPR013116">
    <property type="entry name" value="KARI_N"/>
</dbReference>
<dbReference type="InterPro" id="IPR014359">
    <property type="entry name" value="KARI_prok"/>
</dbReference>
<dbReference type="InterPro" id="IPR036291">
    <property type="entry name" value="NAD(P)-bd_dom_sf"/>
</dbReference>
<dbReference type="NCBIfam" id="TIGR00465">
    <property type="entry name" value="ilvC"/>
    <property type="match status" value="1"/>
</dbReference>
<dbReference type="NCBIfam" id="NF004017">
    <property type="entry name" value="PRK05479.1"/>
    <property type="match status" value="1"/>
</dbReference>
<dbReference type="NCBIfam" id="NF009940">
    <property type="entry name" value="PRK13403.1"/>
    <property type="match status" value="1"/>
</dbReference>
<dbReference type="PANTHER" id="PTHR21371">
    <property type="entry name" value="KETOL-ACID REDUCTOISOMERASE, MITOCHONDRIAL"/>
    <property type="match status" value="1"/>
</dbReference>
<dbReference type="PANTHER" id="PTHR21371:SF1">
    <property type="entry name" value="KETOL-ACID REDUCTOISOMERASE, MITOCHONDRIAL"/>
    <property type="match status" value="1"/>
</dbReference>
<dbReference type="Pfam" id="PF01450">
    <property type="entry name" value="KARI_C"/>
    <property type="match status" value="1"/>
</dbReference>
<dbReference type="Pfam" id="PF07991">
    <property type="entry name" value="KARI_N"/>
    <property type="match status" value="1"/>
</dbReference>
<dbReference type="PIRSF" id="PIRSF000116">
    <property type="entry name" value="IlvC_gammaproteo"/>
    <property type="match status" value="1"/>
</dbReference>
<dbReference type="SUPFAM" id="SSF48179">
    <property type="entry name" value="6-phosphogluconate dehydrogenase C-terminal domain-like"/>
    <property type="match status" value="1"/>
</dbReference>
<dbReference type="SUPFAM" id="SSF51735">
    <property type="entry name" value="NAD(P)-binding Rossmann-fold domains"/>
    <property type="match status" value="1"/>
</dbReference>
<dbReference type="PROSITE" id="PS51851">
    <property type="entry name" value="KARI_C"/>
    <property type="match status" value="1"/>
</dbReference>
<dbReference type="PROSITE" id="PS51850">
    <property type="entry name" value="KARI_N"/>
    <property type="match status" value="1"/>
</dbReference>